<protein>
    <recommendedName>
        <fullName evidence="6">Peptide transporter CstA</fullName>
    </recommendedName>
    <alternativeName>
        <fullName evidence="6">Carbon starvation protein A</fullName>
    </alternativeName>
</protein>
<evidence type="ECO:0000255" key="1"/>
<evidence type="ECO:0000269" key="2">
    <source>
    </source>
</evidence>
<evidence type="ECO:0000269" key="3">
    <source>
    </source>
</evidence>
<evidence type="ECO:0000269" key="4">
    <source>
    </source>
</evidence>
<evidence type="ECO:0000303" key="5">
    <source>
    </source>
</evidence>
<evidence type="ECO:0000305" key="6"/>
<sequence>MNKSGKYLVWTVLSVMGAFALGYIALNRGEQINALWIVVASVCIYLIAYRFYGLYIAKNVLAVDPTRMTPAVRHNDGLDYVPTDKKVLFGHHFAAIAGAGPLVGPVLAAQMGYLPGMIWLLAGVVLAGAVQDFMVLFVSTRRDGRSLGELVKEEMGPTAGVIALVACFMIMVIILAVLAMIVVKALTHSPWGTYTVAFTIPLALFMGIYLRYLRPGRIGEVSVIGLVFLIFAIISGGWVAESPTWAPYFDFTGVQLTWMLVGYGFVAAVLPVWLLLAPRDYLSTFLKIGTIVGLAVGILIMRPTLTMPALTKFVDGTGPVWTGNLFPFLFITIACGAVSGFHALISSGTTPKMLANEGQACFIGYGGMLMESFVAIMALVSACIIDPGVYFAMNSPMAVLAPAGTADVVASAAQVVSSWGFSITPDTLNQIASEVGEQSIISRAGGAPTLAVGMAYILHGALGGMMDVAFWYHFAILFEALFILTAVDAGTRAARFMLQDLLGVVSPGLKRTDSLPANLLATALCVLAWGYFLHQGVVDPLGGINTLWPLFGIANQMLAGMALMLCAVVLFKMKRQRYAWVALVPTAWLLICTLTAGWQKAFSPDAKVGFLAIANKFQAMIDSGNIPSQYTESQLAQLVFNNRLDAGLTIFFMVVVVVLALFSIKTALAALKDPKPTAKETPYEPMPENVEEIVAQAKGAH</sequence>
<comment type="function">
    <text evidence="4">Involved in peptide utilization during carbon starvation.</text>
</comment>
<comment type="subcellular location">
    <subcellularLocation>
        <location evidence="3">Cell inner membrane</location>
        <topology evidence="1">Multi-pass membrane protein</topology>
    </subcellularLocation>
</comment>
<comment type="induction">
    <text evidence="2 4">Induced by carbon starvation. Induction requires the cAMP-cAMP receptor protein (CRP) complex (PubMed:1848300). The carbon storage regulator CsrA regulates translation of cstA by sterically interfering with ribosome binding (PubMed:12867454).</text>
</comment>
<comment type="similarity">
    <text evidence="6">Belongs to the peptide transporter carbon starvation (CstA) (TC 2.A.114) family.</text>
</comment>
<comment type="sequence caution" evidence="6">
    <conflict type="frameshift">
        <sequence resource="EMBL-CDS" id="CAA37087"/>
    </conflict>
</comment>
<dbReference type="EMBL" id="X52904">
    <property type="protein sequence ID" value="CAA37086.1"/>
    <property type="status" value="ALT_FRAME"/>
    <property type="molecule type" value="Genomic_DNA"/>
</dbReference>
<dbReference type="EMBL" id="X52904">
    <property type="protein sequence ID" value="CAA37087.1"/>
    <property type="status" value="ALT_FRAME"/>
    <property type="molecule type" value="Genomic_DNA"/>
</dbReference>
<dbReference type="EMBL" id="U82598">
    <property type="protein sequence ID" value="AAB40798.1"/>
    <property type="molecule type" value="Genomic_DNA"/>
</dbReference>
<dbReference type="EMBL" id="U00096">
    <property type="protein sequence ID" value="AAC73699.1"/>
    <property type="molecule type" value="Genomic_DNA"/>
</dbReference>
<dbReference type="EMBL" id="AP009048">
    <property type="protein sequence ID" value="BAA35227.2"/>
    <property type="molecule type" value="Genomic_DNA"/>
</dbReference>
<dbReference type="EMBL" id="M24148">
    <property type="status" value="NOT_ANNOTATED_CDS"/>
    <property type="molecule type" value="Unassigned_DNA"/>
</dbReference>
<dbReference type="PIR" id="D64793">
    <property type="entry name" value="Q0ECNA"/>
</dbReference>
<dbReference type="RefSeq" id="NP_415130.1">
    <property type="nucleotide sequence ID" value="NC_000913.3"/>
</dbReference>
<dbReference type="RefSeq" id="WP_001043156.1">
    <property type="nucleotide sequence ID" value="NZ_SSZK01000032.1"/>
</dbReference>
<dbReference type="BioGRID" id="4260985">
    <property type="interactions" value="5"/>
</dbReference>
<dbReference type="FunCoup" id="P15078">
    <property type="interactions" value="175"/>
</dbReference>
<dbReference type="STRING" id="511145.b0598"/>
<dbReference type="TCDB" id="2.A.114.1.1">
    <property type="family name" value="the putative peptide transporter carbon starvation csta (csta) family"/>
</dbReference>
<dbReference type="jPOST" id="P15078"/>
<dbReference type="PaxDb" id="511145-b0598"/>
<dbReference type="EnsemblBacteria" id="AAC73699">
    <property type="protein sequence ID" value="AAC73699"/>
    <property type="gene ID" value="b0598"/>
</dbReference>
<dbReference type="GeneID" id="945213"/>
<dbReference type="KEGG" id="ecj:JW0590"/>
<dbReference type="KEGG" id="eco:b0598"/>
<dbReference type="KEGG" id="ecoc:C3026_02985"/>
<dbReference type="PATRIC" id="fig|1411691.4.peg.1671"/>
<dbReference type="EchoBASE" id="EB0165"/>
<dbReference type="eggNOG" id="COG1966">
    <property type="taxonomic scope" value="Bacteria"/>
</dbReference>
<dbReference type="InParanoid" id="P15078"/>
<dbReference type="OMA" id="VMAFWYH"/>
<dbReference type="OrthoDB" id="9761224at2"/>
<dbReference type="PhylomeDB" id="P15078"/>
<dbReference type="BioCyc" id="EcoCyc:EG10167-MONOMER"/>
<dbReference type="BioCyc" id="MetaCyc:EG10167-MONOMER"/>
<dbReference type="PRO" id="PR:P15078"/>
<dbReference type="Proteomes" id="UP000000625">
    <property type="component" value="Chromosome"/>
</dbReference>
<dbReference type="GO" id="GO:0005886">
    <property type="term" value="C:plasma membrane"/>
    <property type="evidence" value="ECO:0000314"/>
    <property type="project" value="EcoCyc"/>
</dbReference>
<dbReference type="GO" id="GO:0005477">
    <property type="term" value="F:pyruvate secondary active transmembrane transporter activity"/>
    <property type="evidence" value="ECO:0000314"/>
    <property type="project" value="EcoCyc"/>
</dbReference>
<dbReference type="GO" id="GO:0031669">
    <property type="term" value="P:cellular response to nutrient levels"/>
    <property type="evidence" value="ECO:0000318"/>
    <property type="project" value="GO_Central"/>
</dbReference>
<dbReference type="GO" id="GO:0009267">
    <property type="term" value="P:cellular response to starvation"/>
    <property type="evidence" value="ECO:0000270"/>
    <property type="project" value="EcoCyc"/>
</dbReference>
<dbReference type="GO" id="GO:0015833">
    <property type="term" value="P:peptide transport"/>
    <property type="evidence" value="ECO:0007669"/>
    <property type="project" value="UniProtKB-KW"/>
</dbReference>
<dbReference type="GO" id="GO:0006849">
    <property type="term" value="P:plasma membrane pyruvate transport"/>
    <property type="evidence" value="ECO:0000314"/>
    <property type="project" value="EcoCyc"/>
</dbReference>
<dbReference type="GO" id="GO:0015031">
    <property type="term" value="P:protein transport"/>
    <property type="evidence" value="ECO:0007669"/>
    <property type="project" value="UniProtKB-KW"/>
</dbReference>
<dbReference type="InterPro" id="IPR051605">
    <property type="entry name" value="CstA"/>
</dbReference>
<dbReference type="InterPro" id="IPR003706">
    <property type="entry name" value="CstA_N"/>
</dbReference>
<dbReference type="NCBIfam" id="NF011590">
    <property type="entry name" value="PRK15015.1"/>
    <property type="match status" value="1"/>
</dbReference>
<dbReference type="PANTHER" id="PTHR30252">
    <property type="entry name" value="INNER MEMBRANE PEPTIDE TRANSPORTER"/>
    <property type="match status" value="1"/>
</dbReference>
<dbReference type="PANTHER" id="PTHR30252:SF2">
    <property type="entry name" value="PEPTIDE TRANSPORTER CSTA"/>
    <property type="match status" value="1"/>
</dbReference>
<dbReference type="Pfam" id="PF02554">
    <property type="entry name" value="CstA"/>
    <property type="match status" value="1"/>
</dbReference>
<proteinExistence type="evidence at protein level"/>
<accession>P15078</accession>
<accession>P23517</accession>
<accession>P77740</accession>
<organism>
    <name type="scientific">Escherichia coli (strain K12)</name>
    <dbReference type="NCBI Taxonomy" id="83333"/>
    <lineage>
        <taxon>Bacteria</taxon>
        <taxon>Pseudomonadati</taxon>
        <taxon>Pseudomonadota</taxon>
        <taxon>Gammaproteobacteria</taxon>
        <taxon>Enterobacterales</taxon>
        <taxon>Enterobacteriaceae</taxon>
        <taxon>Escherichia</taxon>
    </lineage>
</organism>
<name>CSTA_ECOLI</name>
<keyword id="KW-0997">Cell inner membrane</keyword>
<keyword id="KW-1003">Cell membrane</keyword>
<keyword id="KW-0472">Membrane</keyword>
<keyword id="KW-0571">Peptide transport</keyword>
<keyword id="KW-0653">Protein transport</keyword>
<keyword id="KW-1185">Reference proteome</keyword>
<keyword id="KW-0346">Stress response</keyword>
<keyword id="KW-0812">Transmembrane</keyword>
<keyword id="KW-1133">Transmembrane helix</keyword>
<keyword id="KW-0813">Transport</keyword>
<gene>
    <name evidence="5" type="primary">cstA</name>
    <name type="synonym">ybdC</name>
    <name type="ordered locus">b0598</name>
    <name type="ordered locus">JW0590</name>
</gene>
<reference key="1">
    <citation type="journal article" date="1991" name="J. Mol. Biol.">
        <title>Molecular and functional characterization of a carbon starvation gene of Escherichia coli.</title>
        <authorList>
            <person name="Schultz J.E."/>
            <person name="Matin A."/>
        </authorList>
    </citation>
    <scope>NUCLEOTIDE SEQUENCE [GENOMIC DNA]</scope>
    <scope>FUNCTION</scope>
    <scope>INDUCTION</scope>
    <source>
        <strain>K12</strain>
    </source>
</reference>
<reference key="2">
    <citation type="submission" date="1997-01" db="EMBL/GenBank/DDBJ databases">
        <title>Sequence of minutes 4-25 of Escherichia coli.</title>
        <authorList>
            <person name="Chung E."/>
            <person name="Allen E."/>
            <person name="Araujo R."/>
            <person name="Aparicio A.M."/>
            <person name="Davis K."/>
            <person name="Duncan M."/>
            <person name="Federspiel N."/>
            <person name="Hyman R."/>
            <person name="Kalman S."/>
            <person name="Komp C."/>
            <person name="Kurdi O."/>
            <person name="Lew H."/>
            <person name="Lin D."/>
            <person name="Namath A."/>
            <person name="Oefner P."/>
            <person name="Roberts D."/>
            <person name="Schramm S."/>
            <person name="Davis R.W."/>
        </authorList>
    </citation>
    <scope>NUCLEOTIDE SEQUENCE [LARGE SCALE GENOMIC DNA]</scope>
    <source>
        <strain>K12 / MG1655 / ATCC 47076</strain>
    </source>
</reference>
<reference key="3">
    <citation type="journal article" date="1997" name="Science">
        <title>The complete genome sequence of Escherichia coli K-12.</title>
        <authorList>
            <person name="Blattner F.R."/>
            <person name="Plunkett G. III"/>
            <person name="Bloch C.A."/>
            <person name="Perna N.T."/>
            <person name="Burland V."/>
            <person name="Riley M."/>
            <person name="Collado-Vides J."/>
            <person name="Glasner J.D."/>
            <person name="Rode C.K."/>
            <person name="Mayhew G.F."/>
            <person name="Gregor J."/>
            <person name="Davis N.W."/>
            <person name="Kirkpatrick H.A."/>
            <person name="Goeden M.A."/>
            <person name="Rose D.J."/>
            <person name="Mau B."/>
            <person name="Shao Y."/>
        </authorList>
    </citation>
    <scope>NUCLEOTIDE SEQUENCE [LARGE SCALE GENOMIC DNA]</scope>
    <source>
        <strain>K12 / MG1655 / ATCC 47076</strain>
    </source>
</reference>
<reference key="4">
    <citation type="journal article" date="2006" name="Mol. Syst. Biol.">
        <title>Highly accurate genome sequences of Escherichia coli K-12 strains MG1655 and W3110.</title>
        <authorList>
            <person name="Hayashi K."/>
            <person name="Morooka N."/>
            <person name="Yamamoto Y."/>
            <person name="Fujita K."/>
            <person name="Isono K."/>
            <person name="Choi S."/>
            <person name="Ohtsubo E."/>
            <person name="Baba T."/>
            <person name="Wanner B.L."/>
            <person name="Mori H."/>
            <person name="Horiuchi T."/>
        </authorList>
    </citation>
    <scope>NUCLEOTIDE SEQUENCE [LARGE SCALE GENOMIC DNA]</scope>
    <source>
        <strain>K12 / W3110 / ATCC 27325 / DSM 5911</strain>
    </source>
</reference>
<reference key="5">
    <citation type="journal article" date="1989" name="J. Bacteriol.">
        <title>Nucleotide sequence of a cluster of Escherichia coli enterobactin biosynthesis genes: identification of entA and purification of its product 2,3-dihydro-2,3-dihydroxybenzoate dehydrogenase.</title>
        <authorList>
            <person name="Liu J."/>
            <person name="Duncan K."/>
            <person name="Walsh C.T."/>
        </authorList>
    </citation>
    <scope>NUCLEOTIDE SEQUENCE [GENOMIC DNA] OF 1-200</scope>
</reference>
<reference key="6">
    <citation type="journal article" date="2005" name="Science">
        <title>Global topology analysis of the Escherichia coli inner membrane proteome.</title>
        <authorList>
            <person name="Daley D.O."/>
            <person name="Rapp M."/>
            <person name="Granseth E."/>
            <person name="Melen K."/>
            <person name="Drew D."/>
            <person name="von Heijne G."/>
        </authorList>
    </citation>
    <scope>TOPOLOGY [LARGE SCALE ANALYSIS]</scope>
    <scope>SUBCELLULAR LOCATION</scope>
    <source>
        <strain>K12 / MG1655 / ATCC 47076</strain>
    </source>
</reference>
<reference key="7">
    <citation type="journal article" date="2003" name="J. Bacteriol.">
        <title>CsrA regulates translation of the Escherichia coli carbon starvation gene, cstA, by blocking ribosome access to the cstA transcript.</title>
        <authorList>
            <person name="Dubey A.K."/>
            <person name="Baker C.S."/>
            <person name="Suzuki K."/>
            <person name="Jones A.D."/>
            <person name="Pandit P."/>
            <person name="Romeo T."/>
            <person name="Babitzke P."/>
        </authorList>
    </citation>
    <scope>TRANSLATION REGULATION</scope>
</reference>
<feature type="chain" id="PRO_0000190046" description="Peptide transporter CstA">
    <location>
        <begin position="1"/>
        <end position="701"/>
    </location>
</feature>
<feature type="topological domain" description="Cytoplasmic" evidence="6">
    <location>
        <begin position="1"/>
        <end position="6"/>
    </location>
</feature>
<feature type="transmembrane region" description="Helical" evidence="1">
    <location>
        <begin position="7"/>
        <end position="27"/>
    </location>
</feature>
<feature type="topological domain" description="Periplasmic" evidence="6">
    <location>
        <begin position="28"/>
        <end position="33"/>
    </location>
</feature>
<feature type="transmembrane region" description="Helical" evidence="1">
    <location>
        <begin position="34"/>
        <end position="54"/>
    </location>
</feature>
<feature type="topological domain" description="Cytoplasmic" evidence="6">
    <location>
        <begin position="55"/>
        <end position="86"/>
    </location>
</feature>
<feature type="transmembrane region" description="Helical" evidence="1">
    <location>
        <begin position="87"/>
        <end position="107"/>
    </location>
</feature>
<feature type="topological domain" description="Periplasmic" evidence="6">
    <location>
        <begin position="108"/>
        <end position="117"/>
    </location>
</feature>
<feature type="transmembrane region" description="Helical" evidence="1">
    <location>
        <begin position="118"/>
        <end position="138"/>
    </location>
</feature>
<feature type="topological domain" description="Cytoplasmic" evidence="6">
    <location>
        <begin position="139"/>
        <end position="160"/>
    </location>
</feature>
<feature type="transmembrane region" description="Helical" evidence="1">
    <location>
        <begin position="161"/>
        <end position="181"/>
    </location>
</feature>
<feature type="topological domain" description="Periplasmic" evidence="6">
    <location>
        <begin position="182"/>
        <end position="189"/>
    </location>
</feature>
<feature type="transmembrane region" description="Helical" evidence="1">
    <location>
        <begin position="190"/>
        <end position="210"/>
    </location>
</feature>
<feature type="topological domain" description="Cytoplasmic" evidence="6">
    <location>
        <begin position="211"/>
        <end position="217"/>
    </location>
</feature>
<feature type="transmembrane region" description="Helical" evidence="1">
    <location>
        <begin position="218"/>
        <end position="238"/>
    </location>
</feature>
<feature type="topological domain" description="Periplasmic" evidence="6">
    <location>
        <begin position="239"/>
        <end position="255"/>
    </location>
</feature>
<feature type="transmembrane region" description="Helical" evidence="1">
    <location>
        <begin position="256"/>
        <end position="276"/>
    </location>
</feature>
<feature type="topological domain" description="Cytoplasmic" evidence="6">
    <location>
        <begin position="277"/>
        <end position="280"/>
    </location>
</feature>
<feature type="transmembrane region" description="Helical" evidence="1">
    <location>
        <begin position="281"/>
        <end position="301"/>
    </location>
</feature>
<feature type="topological domain" description="Periplasmic" evidence="6">
    <location>
        <begin position="302"/>
        <end position="324"/>
    </location>
</feature>
<feature type="transmembrane region" description="Helical" evidence="1">
    <location>
        <begin position="325"/>
        <end position="345"/>
    </location>
</feature>
<feature type="topological domain" description="Cytoplasmic" evidence="6">
    <location>
        <begin position="346"/>
        <end position="372"/>
    </location>
</feature>
<feature type="transmembrane region" description="Helical" evidence="1">
    <location>
        <begin position="373"/>
        <end position="393"/>
    </location>
</feature>
<feature type="topological domain" description="Periplasmic" evidence="6">
    <location>
        <begin position="394"/>
        <end position="395"/>
    </location>
</feature>
<feature type="transmembrane region" description="Helical" evidence="1">
    <location>
        <begin position="396"/>
        <end position="416"/>
    </location>
</feature>
<feature type="topological domain" description="Cytoplasmic" evidence="6">
    <location>
        <begin position="417"/>
        <end position="439"/>
    </location>
</feature>
<feature type="transmembrane region" description="Helical" evidence="1">
    <location>
        <begin position="440"/>
        <end position="460"/>
    </location>
</feature>
<feature type="topological domain" description="Periplasmic" evidence="6">
    <location>
        <begin position="461"/>
        <end position="463"/>
    </location>
</feature>
<feature type="transmembrane region" description="Helical" evidence="1">
    <location>
        <begin position="464"/>
        <end position="484"/>
    </location>
</feature>
<feature type="topological domain" description="Cytoplasmic" evidence="6">
    <location>
        <begin position="485"/>
        <end position="523"/>
    </location>
</feature>
<feature type="transmembrane region" description="Helical" evidence="1">
    <location>
        <begin position="524"/>
        <end position="544"/>
    </location>
</feature>
<feature type="topological domain" description="Periplasmic" evidence="6">
    <location>
        <begin position="545"/>
        <end position="550"/>
    </location>
</feature>
<feature type="transmembrane region" description="Helical" evidence="1">
    <location>
        <begin position="551"/>
        <end position="571"/>
    </location>
</feature>
<feature type="topological domain" description="Cytoplasmic" evidence="6">
    <location>
        <begin position="572"/>
        <end position="577"/>
    </location>
</feature>
<feature type="transmembrane region" description="Helical" evidence="1">
    <location>
        <begin position="578"/>
        <end position="598"/>
    </location>
</feature>
<feature type="topological domain" description="Periplasmic" evidence="6">
    <location>
        <begin position="599"/>
        <end position="643"/>
    </location>
</feature>
<feature type="transmembrane region" description="Helical" evidence="1">
    <location>
        <begin position="644"/>
        <end position="664"/>
    </location>
</feature>
<feature type="topological domain" description="Cytoplasmic" evidence="3">
    <location>
        <begin position="665"/>
        <end position="701"/>
    </location>
</feature>
<feature type="sequence conflict" description="In Ref. 1; CAA37086." evidence="6" ref="1">
    <original>A</original>
    <variation>G</variation>
    <location>
        <position position="129"/>
    </location>
</feature>